<name>GREA_CHLTR</name>
<gene>
    <name type="primary">greA</name>
    <name type="ordered locus">CT_636</name>
</gene>
<accession>O84641</accession>
<keyword id="KW-0175">Coiled coil</keyword>
<keyword id="KW-0238">DNA-binding</keyword>
<keyword id="KW-1185">Reference proteome</keyword>
<keyword id="KW-0804">Transcription</keyword>
<keyword id="KW-0805">Transcription regulation</keyword>
<comment type="function">
    <text evidence="1">Necessary for efficient RNA polymerase transcription elongation past template-encoded arresting sites. The arresting sites in DNA have the property of trapping a certain fraction of elongating RNA polymerases that pass through, resulting in locked ternary complexes. Cleavage of the nascent transcript by cleavage factors such as GreA or GreB allows the resumption of elongation from the new 3'terminus. GreA releases sequences of 2 to 3 nucleotides (By similarity).</text>
</comment>
<comment type="similarity">
    <text evidence="3">Belongs to the GreA/GreB family.</text>
</comment>
<reference key="1">
    <citation type="journal article" date="1998" name="Science">
        <title>Genome sequence of an obligate intracellular pathogen of humans: Chlamydia trachomatis.</title>
        <authorList>
            <person name="Stephens R.S."/>
            <person name="Kalman S."/>
            <person name="Lammel C.J."/>
            <person name="Fan J."/>
            <person name="Marathe R."/>
            <person name="Aravind L."/>
            <person name="Mitchell W.P."/>
            <person name="Olinger L."/>
            <person name="Tatusov R.L."/>
            <person name="Zhao Q."/>
            <person name="Koonin E.V."/>
            <person name="Davis R.W."/>
        </authorList>
    </citation>
    <scope>NUCLEOTIDE SEQUENCE [LARGE SCALE GENOMIC DNA]</scope>
    <source>
        <strain>ATCC VR-885 / DSM 19411 / UW-3/Cx</strain>
    </source>
</reference>
<feature type="chain" id="PRO_0000177009" description="Transcription elongation factor GreA">
    <location>
        <begin position="1"/>
        <end position="715"/>
    </location>
</feature>
<feature type="domain" description="GRAD1">
    <location>
        <begin position="1"/>
        <end position="502"/>
    </location>
</feature>
<feature type="region of interest" description="GREA">
    <location>
        <begin position="562"/>
        <end position="715"/>
    </location>
</feature>
<feature type="coiled-coil region" evidence="2">
    <location>
        <begin position="603"/>
        <end position="640"/>
    </location>
</feature>
<evidence type="ECO:0000250" key="1"/>
<evidence type="ECO:0000255" key="2"/>
<evidence type="ECO:0000305" key="3"/>
<protein>
    <recommendedName>
        <fullName>Transcription elongation factor GreA</fullName>
    </recommendedName>
    <alternativeName>
        <fullName>Transcript cleavage factor GreA</fullName>
    </alternativeName>
</protein>
<dbReference type="EMBL" id="AE001273">
    <property type="protein sequence ID" value="AAC68240.1"/>
    <property type="molecule type" value="Genomic_DNA"/>
</dbReference>
<dbReference type="PIR" id="H71489">
    <property type="entry name" value="H71489"/>
</dbReference>
<dbReference type="RefSeq" id="NP_220153.1">
    <property type="nucleotide sequence ID" value="NC_000117.1"/>
</dbReference>
<dbReference type="RefSeq" id="WP_009872006.1">
    <property type="nucleotide sequence ID" value="NC_000117.1"/>
</dbReference>
<dbReference type="SMR" id="O84641"/>
<dbReference type="STRING" id="272561.CT_636"/>
<dbReference type="EnsemblBacteria" id="AAC68240">
    <property type="protein sequence ID" value="AAC68240"/>
    <property type="gene ID" value="CT_636"/>
</dbReference>
<dbReference type="GeneID" id="884416"/>
<dbReference type="KEGG" id="ctr:CT_636"/>
<dbReference type="PATRIC" id="fig|272561.5.peg.696"/>
<dbReference type="HOGENOM" id="CLU_026840_1_0_0"/>
<dbReference type="InParanoid" id="O84641"/>
<dbReference type="OrthoDB" id="9808774at2"/>
<dbReference type="Proteomes" id="UP000000431">
    <property type="component" value="Chromosome"/>
</dbReference>
<dbReference type="GO" id="GO:0003677">
    <property type="term" value="F:DNA binding"/>
    <property type="evidence" value="ECO:0007669"/>
    <property type="project" value="UniProtKB-UniRule"/>
</dbReference>
<dbReference type="GO" id="GO:0070063">
    <property type="term" value="F:RNA polymerase binding"/>
    <property type="evidence" value="ECO:0007669"/>
    <property type="project" value="InterPro"/>
</dbReference>
<dbReference type="GO" id="GO:0006354">
    <property type="term" value="P:DNA-templated transcription elongation"/>
    <property type="evidence" value="ECO:0000318"/>
    <property type="project" value="GO_Central"/>
</dbReference>
<dbReference type="GO" id="GO:0032784">
    <property type="term" value="P:regulation of DNA-templated transcription elongation"/>
    <property type="evidence" value="ECO:0007669"/>
    <property type="project" value="UniProtKB-UniRule"/>
</dbReference>
<dbReference type="FunFam" id="1.10.287.180:FF:000001">
    <property type="entry name" value="Transcription elongation factor GreA"/>
    <property type="match status" value="1"/>
</dbReference>
<dbReference type="Gene3D" id="3.10.50.30">
    <property type="entry name" value="Transcription elongation factor, GreA/GreB, C-terminal domain"/>
    <property type="match status" value="1"/>
</dbReference>
<dbReference type="Gene3D" id="1.10.287.180">
    <property type="entry name" value="Transcription elongation factor, GreA/GreB, N-terminal domain"/>
    <property type="match status" value="1"/>
</dbReference>
<dbReference type="HAMAP" id="MF_00105">
    <property type="entry name" value="GreA_GreB"/>
    <property type="match status" value="1"/>
</dbReference>
<dbReference type="InterPro" id="IPR036953">
    <property type="entry name" value="GreA/GreB_C_sf"/>
</dbReference>
<dbReference type="InterPro" id="IPR018151">
    <property type="entry name" value="TF_GreA/GreB_CS"/>
</dbReference>
<dbReference type="InterPro" id="IPR028624">
    <property type="entry name" value="Tscrpt_elong_fac_GreA/B"/>
</dbReference>
<dbReference type="InterPro" id="IPR001437">
    <property type="entry name" value="Tscrpt_elong_fac_GreA/B_C"/>
</dbReference>
<dbReference type="InterPro" id="IPR023459">
    <property type="entry name" value="Tscrpt_elong_fac_GreA/B_fam"/>
</dbReference>
<dbReference type="InterPro" id="IPR022691">
    <property type="entry name" value="Tscrpt_elong_fac_GreA/B_N"/>
</dbReference>
<dbReference type="InterPro" id="IPR036805">
    <property type="entry name" value="Tscrpt_elong_fac_GreA/B_N_sf"/>
</dbReference>
<dbReference type="NCBIfam" id="NF004969">
    <property type="entry name" value="PRK06330.1"/>
    <property type="match status" value="1"/>
</dbReference>
<dbReference type="PANTHER" id="PTHR30437">
    <property type="entry name" value="TRANSCRIPTION ELONGATION FACTOR GREA"/>
    <property type="match status" value="1"/>
</dbReference>
<dbReference type="PANTHER" id="PTHR30437:SF4">
    <property type="entry name" value="TRANSCRIPTION ELONGATION FACTOR GREA"/>
    <property type="match status" value="1"/>
</dbReference>
<dbReference type="Pfam" id="PF01272">
    <property type="entry name" value="GreA_GreB"/>
    <property type="match status" value="1"/>
</dbReference>
<dbReference type="Pfam" id="PF03449">
    <property type="entry name" value="GreA_GreB_N"/>
    <property type="match status" value="1"/>
</dbReference>
<dbReference type="SUPFAM" id="SSF54534">
    <property type="entry name" value="FKBP-like"/>
    <property type="match status" value="1"/>
</dbReference>
<dbReference type="SUPFAM" id="SSF46557">
    <property type="entry name" value="GreA transcript cleavage protein, N-terminal domain"/>
    <property type="match status" value="1"/>
</dbReference>
<dbReference type="PROSITE" id="PS00829">
    <property type="entry name" value="GREAB_1"/>
    <property type="match status" value="1"/>
</dbReference>
<dbReference type="PROSITE" id="PS00830">
    <property type="entry name" value="GREAB_2"/>
    <property type="match status" value="1"/>
</dbReference>
<organism>
    <name type="scientific">Chlamydia trachomatis serovar D (strain ATCC VR-885 / DSM 19411 / UW-3/Cx)</name>
    <dbReference type="NCBI Taxonomy" id="272561"/>
    <lineage>
        <taxon>Bacteria</taxon>
        <taxon>Pseudomonadati</taxon>
        <taxon>Chlamydiota</taxon>
        <taxon>Chlamydiia</taxon>
        <taxon>Chlamydiales</taxon>
        <taxon>Chlamydiaceae</taxon>
        <taxon>Chlamydia/Chlamydophila group</taxon>
        <taxon>Chlamydia</taxon>
    </lineage>
</organism>
<sequence>MDYLEKLQSLMENHPSDFFSLWEEYCFNDVVKGDELVVLLEKIKGSTIAPAFGKIAESVIPLWEQLPEGEEKDKVLSLVFDVQTTNSKNLLEIALQQVKKYEDSANYKEALRIVGLRDGITFSHCLGRFALLMHLSEGNFVFHQGGWGVGEIMGVSFLQQKVLVEFEGVLTAKDISFETAFRMLVPLRKDHFLARRFGDPDAFEAFARKEPVAAIECLLKDLGPKNAKEIRNELVELVIPEEDWSRWWQSAKIKMKKDARILAPASSKDPYVFDPKGFSFVSQLQASLSGSNDANKKITSCYAFVRDLGSELKDESNRQLVIKELKALDLPADSALLIQRAMLLSEFLGEKAPELECENIAKLSEDQLFDIVNNIEILSLQKSFLALIHSCSPVWVPVYTKLFLTTSTSMLREQVFKVLNADKEARENILKKVFAMIEQPLLCPELFVWLFARVVDGEDGLFAESDKKEIERQMLASALELMHKVATTSQKDLGKKLYSFLVGQRFLVVRQIIDQASIEYLKEFVLLSSKCPQFTQGDLGVLRSLAEVVQPALKRGTPEEEENILWTTSDSFTRMKNKLQSLVGKEMVENAKEIEDARALGDLRENSEYKIALERRARLQEEIHVLSEEINRAKILTKDAVFTDSVGVGCKVVLESDQGDKVCYTILGPWDANPDEKILSLKSKLAQEMVGKAVGETVLFQGKKHKIKEISSIWD</sequence>
<proteinExistence type="inferred from homology"/>